<keyword id="KW-0456">Lyase</keyword>
<keyword id="KW-0501">Molybdenum cofactor biosynthesis</keyword>
<keyword id="KW-1185">Reference proteome</keyword>
<dbReference type="EC" id="4.6.1.17" evidence="1"/>
<dbReference type="EMBL" id="CP001339">
    <property type="protein sequence ID" value="ACL74022.1"/>
    <property type="molecule type" value="Genomic_DNA"/>
</dbReference>
<dbReference type="RefSeq" id="WP_012639485.1">
    <property type="nucleotide sequence ID" value="NC_011901.1"/>
</dbReference>
<dbReference type="SMR" id="B8GPA2"/>
<dbReference type="STRING" id="396588.Tgr7_2950"/>
<dbReference type="KEGG" id="tgr:Tgr7_2950"/>
<dbReference type="eggNOG" id="COG0315">
    <property type="taxonomic scope" value="Bacteria"/>
</dbReference>
<dbReference type="HOGENOM" id="CLU_074693_1_1_6"/>
<dbReference type="OrthoDB" id="9794429at2"/>
<dbReference type="UniPathway" id="UPA00344"/>
<dbReference type="Proteomes" id="UP000002383">
    <property type="component" value="Chromosome"/>
</dbReference>
<dbReference type="GO" id="GO:0061799">
    <property type="term" value="F:cyclic pyranopterin monophosphate synthase activity"/>
    <property type="evidence" value="ECO:0007669"/>
    <property type="project" value="UniProtKB-UniRule"/>
</dbReference>
<dbReference type="GO" id="GO:0006777">
    <property type="term" value="P:Mo-molybdopterin cofactor biosynthetic process"/>
    <property type="evidence" value="ECO:0007669"/>
    <property type="project" value="UniProtKB-UniRule"/>
</dbReference>
<dbReference type="CDD" id="cd01420">
    <property type="entry name" value="MoaC_PE"/>
    <property type="match status" value="1"/>
</dbReference>
<dbReference type="Gene3D" id="3.30.70.640">
    <property type="entry name" value="Molybdopterin cofactor biosynthesis C (MoaC) domain"/>
    <property type="match status" value="1"/>
</dbReference>
<dbReference type="HAMAP" id="MF_01224_B">
    <property type="entry name" value="MoaC_B"/>
    <property type="match status" value="1"/>
</dbReference>
<dbReference type="InterPro" id="IPR023045">
    <property type="entry name" value="MoaC"/>
</dbReference>
<dbReference type="InterPro" id="IPR047594">
    <property type="entry name" value="MoaC_bact/euk"/>
</dbReference>
<dbReference type="InterPro" id="IPR036522">
    <property type="entry name" value="MoaC_sf"/>
</dbReference>
<dbReference type="InterPro" id="IPR050105">
    <property type="entry name" value="MoCo_biosynth_MoaA/MoaC"/>
</dbReference>
<dbReference type="InterPro" id="IPR002820">
    <property type="entry name" value="Mopterin_CF_biosynth-C_dom"/>
</dbReference>
<dbReference type="NCBIfam" id="TIGR00581">
    <property type="entry name" value="moaC"/>
    <property type="match status" value="1"/>
</dbReference>
<dbReference type="NCBIfam" id="NF006870">
    <property type="entry name" value="PRK09364.1"/>
    <property type="match status" value="1"/>
</dbReference>
<dbReference type="PANTHER" id="PTHR22960">
    <property type="entry name" value="MOLYBDOPTERIN COFACTOR SYNTHESIS PROTEIN A"/>
    <property type="match status" value="1"/>
</dbReference>
<dbReference type="Pfam" id="PF01967">
    <property type="entry name" value="MoaC"/>
    <property type="match status" value="1"/>
</dbReference>
<dbReference type="SUPFAM" id="SSF55040">
    <property type="entry name" value="Molybdenum cofactor biosynthesis protein C, MoaC"/>
    <property type="match status" value="1"/>
</dbReference>
<organism>
    <name type="scientific">Thioalkalivibrio sulfidiphilus (strain HL-EbGR7)</name>
    <dbReference type="NCBI Taxonomy" id="396588"/>
    <lineage>
        <taxon>Bacteria</taxon>
        <taxon>Pseudomonadati</taxon>
        <taxon>Pseudomonadota</taxon>
        <taxon>Gammaproteobacteria</taxon>
        <taxon>Chromatiales</taxon>
        <taxon>Ectothiorhodospiraceae</taxon>
        <taxon>Thioalkalivibrio</taxon>
    </lineage>
</organism>
<accession>B8GPA2</accession>
<protein>
    <recommendedName>
        <fullName evidence="1">Cyclic pyranopterin monophosphate synthase</fullName>
        <ecNumber evidence="1">4.6.1.17</ecNumber>
    </recommendedName>
    <alternativeName>
        <fullName evidence="1">Molybdenum cofactor biosynthesis protein C</fullName>
    </alternativeName>
</protein>
<comment type="function">
    <text evidence="1">Catalyzes the conversion of (8S)-3',8-cyclo-7,8-dihydroguanosine 5'-triphosphate to cyclic pyranopterin monophosphate (cPMP).</text>
</comment>
<comment type="catalytic activity">
    <reaction evidence="1">
        <text>(8S)-3',8-cyclo-7,8-dihydroguanosine 5'-triphosphate = cyclic pyranopterin phosphate + diphosphate</text>
        <dbReference type="Rhea" id="RHEA:49580"/>
        <dbReference type="ChEBI" id="CHEBI:33019"/>
        <dbReference type="ChEBI" id="CHEBI:59648"/>
        <dbReference type="ChEBI" id="CHEBI:131766"/>
        <dbReference type="EC" id="4.6.1.17"/>
    </reaction>
</comment>
<comment type="pathway">
    <text evidence="1">Cofactor biosynthesis; molybdopterin biosynthesis.</text>
</comment>
<comment type="subunit">
    <text evidence="1">Homohexamer; trimer of dimers.</text>
</comment>
<comment type="similarity">
    <text evidence="1">Belongs to the MoaC family.</text>
</comment>
<reference key="1">
    <citation type="journal article" date="2011" name="Stand. Genomic Sci.">
        <title>Complete genome sequence of 'Thioalkalivibrio sulfidophilus' HL-EbGr7.</title>
        <authorList>
            <person name="Muyzer G."/>
            <person name="Sorokin D.Y."/>
            <person name="Mavromatis K."/>
            <person name="Lapidus A."/>
            <person name="Clum A."/>
            <person name="Ivanova N."/>
            <person name="Pati A."/>
            <person name="d'Haeseleer P."/>
            <person name="Woyke T."/>
            <person name="Kyrpides N.C."/>
        </authorList>
    </citation>
    <scope>NUCLEOTIDE SEQUENCE [LARGE SCALE GENOMIC DNA]</scope>
    <source>
        <strain>HL-EbGR7</strain>
    </source>
</reference>
<sequence>MSTLTHFNAKGEAHMVDVGDKSVTHRVAVAEGHITMEPETLALIRSGTHKKGDVLGIARVAGIMASKKTSELVPLCHPISLTHVEVELSTADSPPSVHCRVTAETRGQTGVEMEALTAVQVALLTVYDMCKAVDRFMTMGGVRLVHKSGGKSGTWDLKGSG</sequence>
<name>MOAC_THISH</name>
<evidence type="ECO:0000255" key="1">
    <source>
        <dbReference type="HAMAP-Rule" id="MF_01224"/>
    </source>
</evidence>
<gene>
    <name evidence="1" type="primary">moaC</name>
    <name type="ordered locus">Tgr7_2950</name>
</gene>
<proteinExistence type="inferred from homology"/>
<feature type="chain" id="PRO_1000164904" description="Cyclic pyranopterin monophosphate synthase">
    <location>
        <begin position="1"/>
        <end position="161"/>
    </location>
</feature>
<feature type="active site" evidence="1">
    <location>
        <position position="128"/>
    </location>
</feature>
<feature type="binding site" evidence="1">
    <location>
        <begin position="75"/>
        <end position="77"/>
    </location>
    <ligand>
        <name>substrate</name>
    </ligand>
</feature>
<feature type="binding site" evidence="1">
    <location>
        <begin position="113"/>
        <end position="114"/>
    </location>
    <ligand>
        <name>substrate</name>
    </ligand>
</feature>